<sequence length="167" mass="19331">MCSDFEEETSIQKFKRRLKEEPLIPLGCAATCYALYRAYRSGKAKDSVEMNRMFRARIYAQFFTLLAVVAGGMYYKTERKQRREFEKKVEERKAQEKRDAWLRELEARDKEDKGWKERHAAVSVTAKKETEGAVDKNVNQAPTEEVVEKRGTGILDAVKALVQGKKD</sequence>
<gene>
    <name type="primary">rcf1-A</name>
    <name type="synonym">aim31</name>
    <name type="ORF">PMAA_094690</name>
</gene>
<proteinExistence type="inferred from homology"/>
<keyword id="KW-0175">Coiled coil</keyword>
<keyword id="KW-0472">Membrane</keyword>
<keyword id="KW-0496">Mitochondrion</keyword>
<keyword id="KW-1185">Reference proteome</keyword>
<keyword id="KW-0812">Transmembrane</keyword>
<keyword id="KW-1133">Transmembrane helix</keyword>
<accession>B6QHL9</accession>
<evidence type="ECO:0000250" key="1"/>
<evidence type="ECO:0000255" key="2"/>
<evidence type="ECO:0000255" key="3">
    <source>
        <dbReference type="PROSITE-ProRule" id="PRU00836"/>
    </source>
</evidence>
<evidence type="ECO:0000305" key="4"/>
<comment type="function">
    <text evidence="1">Cytochrome c oxidase subunit which plays a role in assembly of respiratory supercomplexes.</text>
</comment>
<comment type="subunit">
    <text evidence="1">Associates with the respiratory chain complex III/complex IV supercomplex.</text>
</comment>
<comment type="subcellular location">
    <subcellularLocation>
        <location evidence="3">Mitochondrion membrane</location>
        <topology evidence="3">Multi-pass membrane protein</topology>
    </subcellularLocation>
</comment>
<comment type="similarity">
    <text evidence="4">Belongs to the RCF1 family.</text>
</comment>
<reference key="1">
    <citation type="journal article" date="2015" name="Genome Announc.">
        <title>Genome sequence of the AIDS-associated pathogen Penicillium marneffei (ATCC18224) and its near taxonomic relative Talaromyces stipitatus (ATCC10500).</title>
        <authorList>
            <person name="Nierman W.C."/>
            <person name="Fedorova-Abrams N.D."/>
            <person name="Andrianopoulos A."/>
        </authorList>
    </citation>
    <scope>NUCLEOTIDE SEQUENCE [LARGE SCALE GENOMIC DNA]</scope>
    <source>
        <strain>ATCC 18224 / CBS 334.59 / QM 7333</strain>
    </source>
</reference>
<name>RCF1A_TALMQ</name>
<dbReference type="EMBL" id="DS995902">
    <property type="protein sequence ID" value="EEA22864.1"/>
    <property type="molecule type" value="Genomic_DNA"/>
</dbReference>
<dbReference type="RefSeq" id="XP_002149031.1">
    <property type="nucleotide sequence ID" value="XM_002148995.1"/>
</dbReference>
<dbReference type="STRING" id="441960.B6QHL9"/>
<dbReference type="VEuPathDB" id="FungiDB:PMAA_094690"/>
<dbReference type="HOGENOM" id="CLU_087356_0_2_1"/>
<dbReference type="Proteomes" id="UP000001294">
    <property type="component" value="Unassembled WGS sequence"/>
</dbReference>
<dbReference type="GO" id="GO:0031966">
    <property type="term" value="C:mitochondrial membrane"/>
    <property type="evidence" value="ECO:0007669"/>
    <property type="project" value="UniProtKB-SubCell"/>
</dbReference>
<dbReference type="GO" id="GO:0097250">
    <property type="term" value="P:mitochondrial respirasome assembly"/>
    <property type="evidence" value="ECO:0007669"/>
    <property type="project" value="TreeGrafter"/>
</dbReference>
<dbReference type="Gene3D" id="6.10.140.1320">
    <property type="match status" value="1"/>
</dbReference>
<dbReference type="InterPro" id="IPR007667">
    <property type="entry name" value="Hypoxia_induced_domain"/>
</dbReference>
<dbReference type="InterPro" id="IPR050355">
    <property type="entry name" value="RCF1"/>
</dbReference>
<dbReference type="PANTHER" id="PTHR12297:SF3">
    <property type="entry name" value="HIG1 DOMAIN FAMILY MEMBER 1A"/>
    <property type="match status" value="1"/>
</dbReference>
<dbReference type="PANTHER" id="PTHR12297">
    <property type="entry name" value="HYPOXIA-INDUCBILE GENE 1 HIG1 -RELATED"/>
    <property type="match status" value="1"/>
</dbReference>
<dbReference type="Pfam" id="PF04588">
    <property type="entry name" value="HIG_1_N"/>
    <property type="match status" value="1"/>
</dbReference>
<dbReference type="PROSITE" id="PS51503">
    <property type="entry name" value="HIG1"/>
    <property type="match status" value="1"/>
</dbReference>
<feature type="chain" id="PRO_0000399646" description="Respiratory supercomplex factor 1-A, mitochondrial">
    <location>
        <begin position="1"/>
        <end position="167"/>
    </location>
</feature>
<feature type="transmembrane region" description="Helical" evidence="3">
    <location>
        <begin position="21"/>
        <end position="38"/>
    </location>
</feature>
<feature type="transmembrane region" description="Helical" evidence="3">
    <location>
        <begin position="53"/>
        <end position="75"/>
    </location>
</feature>
<feature type="domain" description="HIG1" evidence="3">
    <location>
        <begin position="1"/>
        <end position="86"/>
    </location>
</feature>
<feature type="coiled-coil region" evidence="2">
    <location>
        <begin position="75"/>
        <end position="107"/>
    </location>
</feature>
<protein>
    <recommendedName>
        <fullName>Respiratory supercomplex factor 1-A, mitochondrial</fullName>
    </recommendedName>
</protein>
<organism>
    <name type="scientific">Talaromyces marneffei (strain ATCC 18224 / CBS 334.59 / QM 7333)</name>
    <name type="common">Penicillium marneffei</name>
    <dbReference type="NCBI Taxonomy" id="441960"/>
    <lineage>
        <taxon>Eukaryota</taxon>
        <taxon>Fungi</taxon>
        <taxon>Dikarya</taxon>
        <taxon>Ascomycota</taxon>
        <taxon>Pezizomycotina</taxon>
        <taxon>Eurotiomycetes</taxon>
        <taxon>Eurotiomycetidae</taxon>
        <taxon>Eurotiales</taxon>
        <taxon>Trichocomaceae</taxon>
        <taxon>Talaromyces</taxon>
        <taxon>Talaromyces sect. Talaromyces</taxon>
    </lineage>
</organism>